<evidence type="ECO:0000250" key="1"/>
<evidence type="ECO:0000269" key="2">
    <source>
    </source>
</evidence>
<evidence type="ECO:0000305" key="3"/>
<reference key="1">
    <citation type="journal article" date="2001" name="Nature">
        <title>Genome sequence and gene compaction of the eukaryote parasite Encephalitozoon cuniculi.</title>
        <authorList>
            <person name="Katinka M.D."/>
            <person name="Duprat S."/>
            <person name="Cornillot E."/>
            <person name="Metenier G."/>
            <person name="Thomarat F."/>
            <person name="Prensier G."/>
            <person name="Barbe V."/>
            <person name="Peyretaillade E."/>
            <person name="Brottier P."/>
            <person name="Wincker P."/>
            <person name="Delbac F."/>
            <person name="El Alaoui H."/>
            <person name="Peyret P."/>
            <person name="Saurin W."/>
            <person name="Gouy M."/>
            <person name="Weissenbach J."/>
            <person name="Vivares C.P."/>
        </authorList>
    </citation>
    <scope>NUCLEOTIDE SEQUENCE [LARGE SCALE GENOMIC DNA]</scope>
    <source>
        <strain>GB-M1</strain>
    </source>
</reference>
<reference key="2">
    <citation type="journal article" date="2006" name="Proteomics">
        <title>Proteomic analysis of the eukaryotic parasite Encephalitozoon cuniculi (microsporidia): a reference map for proteins expressed in late sporogonial stages.</title>
        <authorList>
            <person name="Brosson D."/>
            <person name="Kuhn L."/>
            <person name="Delbac F."/>
            <person name="Garin J."/>
            <person name="Vivares C.P."/>
            <person name="Texier C."/>
        </authorList>
    </citation>
    <scope>IDENTIFICATION BY MASS SPECTROMETRY [LARGE SCALE ANALYSIS]</scope>
    <scope>DEVELOPMENTAL STAGE</scope>
</reference>
<proteinExistence type="evidence at protein level"/>
<comment type="catalytic activity">
    <reaction>
        <text>O-phospho-L-seryl-[protein] + H2O = L-seryl-[protein] + phosphate</text>
        <dbReference type="Rhea" id="RHEA:20629"/>
        <dbReference type="Rhea" id="RHEA-COMP:9863"/>
        <dbReference type="Rhea" id="RHEA-COMP:11604"/>
        <dbReference type="ChEBI" id="CHEBI:15377"/>
        <dbReference type="ChEBI" id="CHEBI:29999"/>
        <dbReference type="ChEBI" id="CHEBI:43474"/>
        <dbReference type="ChEBI" id="CHEBI:83421"/>
        <dbReference type="EC" id="3.1.3.16"/>
    </reaction>
</comment>
<comment type="catalytic activity">
    <reaction>
        <text>O-phospho-L-threonyl-[protein] + H2O = L-threonyl-[protein] + phosphate</text>
        <dbReference type="Rhea" id="RHEA:47004"/>
        <dbReference type="Rhea" id="RHEA-COMP:11060"/>
        <dbReference type="Rhea" id="RHEA-COMP:11605"/>
        <dbReference type="ChEBI" id="CHEBI:15377"/>
        <dbReference type="ChEBI" id="CHEBI:30013"/>
        <dbReference type="ChEBI" id="CHEBI:43474"/>
        <dbReference type="ChEBI" id="CHEBI:61977"/>
        <dbReference type="EC" id="3.1.3.16"/>
    </reaction>
</comment>
<comment type="cofactor">
    <cofactor evidence="1">
        <name>Mn(2+)</name>
        <dbReference type="ChEBI" id="CHEBI:29035"/>
    </cofactor>
    <text evidence="1">Binds 2 manganese ions per subunit.</text>
</comment>
<comment type="developmental stage">
    <text evidence="2">Expressed in late sporogonial stages.</text>
</comment>
<comment type="similarity">
    <text evidence="3">Belongs to the PPP phosphatase family. PP-1 subfamily.</text>
</comment>
<organism>
    <name type="scientific">Encephalitozoon cuniculi (strain GB-M1)</name>
    <name type="common">Microsporidian parasite</name>
    <dbReference type="NCBI Taxonomy" id="284813"/>
    <lineage>
        <taxon>Eukaryota</taxon>
        <taxon>Fungi</taxon>
        <taxon>Fungi incertae sedis</taxon>
        <taxon>Microsporidia</taxon>
        <taxon>Unikaryonidae</taxon>
        <taxon>Encephalitozoon</taxon>
    </lineage>
</organism>
<keyword id="KW-0378">Hydrolase</keyword>
<keyword id="KW-0464">Manganese</keyword>
<keyword id="KW-0479">Metal-binding</keyword>
<keyword id="KW-0904">Protein phosphatase</keyword>
<keyword id="KW-1185">Reference proteome</keyword>
<protein>
    <recommendedName>
        <fullName>Probable serine/threonine-protein phosphatase ECU05_0440</fullName>
        <shortName>PP-1G</shortName>
        <ecNumber>3.1.3.16</ecNumber>
    </recommendedName>
    <alternativeName>
        <fullName>Protein phosphatase 1C catalytic subunit</fullName>
    </alternativeName>
</protein>
<dbReference type="EC" id="3.1.3.16"/>
<dbReference type="EMBL" id="AL590445">
    <property type="protein sequence ID" value="CAD26562.1"/>
    <property type="molecule type" value="Genomic_DNA"/>
</dbReference>
<dbReference type="RefSeq" id="NP_597385.1">
    <property type="nucleotide sequence ID" value="NM_001041251.1"/>
</dbReference>
<dbReference type="SMR" id="Q8SRZ0"/>
<dbReference type="STRING" id="284813.Q8SRZ0"/>
<dbReference type="GeneID" id="859049"/>
<dbReference type="KEGG" id="ecu:ECU05_0440"/>
<dbReference type="VEuPathDB" id="MicrosporidiaDB:ECU05_0440"/>
<dbReference type="HOGENOM" id="CLU_004962_5_2_1"/>
<dbReference type="InParanoid" id="Q8SRZ0"/>
<dbReference type="OMA" id="CENSFEM"/>
<dbReference type="OrthoDB" id="445564at2759"/>
<dbReference type="Proteomes" id="UP000000819">
    <property type="component" value="Chromosome V"/>
</dbReference>
<dbReference type="GO" id="GO:0046872">
    <property type="term" value="F:metal ion binding"/>
    <property type="evidence" value="ECO:0007669"/>
    <property type="project" value="UniProtKB-KW"/>
</dbReference>
<dbReference type="GO" id="GO:0004722">
    <property type="term" value="F:protein serine/threonine phosphatase activity"/>
    <property type="evidence" value="ECO:0007669"/>
    <property type="project" value="UniProtKB-EC"/>
</dbReference>
<dbReference type="Gene3D" id="3.60.21.10">
    <property type="match status" value="1"/>
</dbReference>
<dbReference type="Gene3D" id="1.25.40.10">
    <property type="entry name" value="Tetratricopeptide repeat domain"/>
    <property type="match status" value="1"/>
</dbReference>
<dbReference type="InterPro" id="IPR004843">
    <property type="entry name" value="Calcineurin-like_PHP_ApaH"/>
</dbReference>
<dbReference type="InterPro" id="IPR029052">
    <property type="entry name" value="Metallo-depent_PP-like"/>
</dbReference>
<dbReference type="InterPro" id="IPR051134">
    <property type="entry name" value="PPP_phosphatase"/>
</dbReference>
<dbReference type="InterPro" id="IPR006186">
    <property type="entry name" value="Ser/Thr-sp_prot-phosphatase"/>
</dbReference>
<dbReference type="InterPro" id="IPR011990">
    <property type="entry name" value="TPR-like_helical_dom_sf"/>
</dbReference>
<dbReference type="PANTHER" id="PTHR45668">
    <property type="entry name" value="SERINE/THREONINE-PROTEIN PHOSPHATASE 5-RELATED"/>
    <property type="match status" value="1"/>
</dbReference>
<dbReference type="PANTHER" id="PTHR45668:SF9">
    <property type="entry name" value="SERINE_THREONINE-PROTEIN PHOSPHATASE 7"/>
    <property type="match status" value="1"/>
</dbReference>
<dbReference type="Pfam" id="PF00149">
    <property type="entry name" value="Metallophos"/>
    <property type="match status" value="1"/>
</dbReference>
<dbReference type="PIRSF" id="PIRSF033096">
    <property type="entry name" value="PPPtase_5"/>
    <property type="match status" value="1"/>
</dbReference>
<dbReference type="PRINTS" id="PR00114">
    <property type="entry name" value="STPHPHTASE"/>
</dbReference>
<dbReference type="SMART" id="SM00156">
    <property type="entry name" value="PP2Ac"/>
    <property type="match status" value="1"/>
</dbReference>
<dbReference type="SUPFAM" id="SSF56300">
    <property type="entry name" value="Metallo-dependent phosphatases"/>
    <property type="match status" value="1"/>
</dbReference>
<dbReference type="SUPFAM" id="SSF48452">
    <property type="entry name" value="TPR-like"/>
    <property type="match status" value="1"/>
</dbReference>
<name>PP1L_ENCCU</name>
<gene>
    <name type="ordered locus">ECU05_0440</name>
</gene>
<feature type="chain" id="PRO_0000381759" description="Probable serine/threonine-protein phosphatase ECU05_0440">
    <location>
        <begin position="1"/>
        <end position="457"/>
    </location>
</feature>
<feature type="active site" description="Proton donor" evidence="1">
    <location>
        <position position="258"/>
    </location>
</feature>
<feature type="binding site" evidence="1">
    <location>
        <position position="198"/>
    </location>
    <ligand>
        <name>Mn(2+)</name>
        <dbReference type="ChEBI" id="CHEBI:29035"/>
        <label>1</label>
    </ligand>
</feature>
<feature type="binding site" evidence="1">
    <location>
        <position position="200"/>
    </location>
    <ligand>
        <name>Mn(2+)</name>
        <dbReference type="ChEBI" id="CHEBI:29035"/>
        <label>1</label>
    </ligand>
</feature>
<feature type="binding site" evidence="1">
    <location>
        <position position="225"/>
    </location>
    <ligand>
        <name>Mn(2+)</name>
        <dbReference type="ChEBI" id="CHEBI:29035"/>
        <label>1</label>
    </ligand>
</feature>
<feature type="binding site" evidence="1">
    <location>
        <position position="225"/>
    </location>
    <ligand>
        <name>Mn(2+)</name>
        <dbReference type="ChEBI" id="CHEBI:29035"/>
        <label>2</label>
    </ligand>
</feature>
<feature type="binding site" evidence="1">
    <location>
        <position position="257"/>
    </location>
    <ligand>
        <name>Mn(2+)</name>
        <dbReference type="ChEBI" id="CHEBI:29035"/>
        <label>2</label>
    </ligand>
</feature>
<feature type="binding site" evidence="1">
    <location>
        <position position="309"/>
    </location>
    <ligand>
        <name>Mn(2+)</name>
        <dbReference type="ChEBI" id="CHEBI:29035"/>
        <label>2</label>
    </ligand>
</feature>
<feature type="binding site" evidence="1">
    <location>
        <position position="383"/>
    </location>
    <ligand>
        <name>Mn(2+)</name>
        <dbReference type="ChEBI" id="CHEBI:29035"/>
        <label>2</label>
    </ligand>
</feature>
<accession>Q8SRZ0</accession>
<sequence length="457" mass="51851">MDIREMDLKRQEANALFKKQMIDEALEIYKTSFLEATKSVVPGTRNDLLEEQLSLLAYNISVVYYKRKNFPKSLAFGLESLKHRKSDKVLCKICAIYLRLGMLREYKEMYDQMVTRSSGPEVAFLLKRMKLSEVIVEKHLEKRVTLESLHELSKEISGGRSIPADTLESILEQGESILLGCENVVHTESSGEVLIFGDTHGQYFDVVSILNKVFDKDRMVIFNGDYVDRGSHSVENFALLLSLKILFPGRVHLTRGNHELSDINRVYGFYDEVKRKYPFSSDSVYRRFQDAFRALPISIIVNEKVFITHGGLPEAPVKVDNLQEIYRMTDTHTDELLKGLLWSDPEEILGTEESKRRAGVVFGADVTARFLERNGLDLLVRSHQAVDDGYRVHHGGKVVTIFSAPEYEGSKGPGSYLVLNPSAGEADEIVEISPLTRYKAVKFGRSDGKEVLRLLCN</sequence>